<comment type="function">
    <text evidence="1">Dual-specificity methyltransferase that catalyzes the formation of 5-methyluridine at position 54 (m5U54) in all tRNAs, and that of position 341 (m5U341) in tmRNA (transfer-mRNA).</text>
</comment>
<comment type="catalytic activity">
    <reaction evidence="1">
        <text>uridine(54) in tRNA + S-adenosyl-L-methionine = 5-methyluridine(54) in tRNA + S-adenosyl-L-homocysteine + H(+)</text>
        <dbReference type="Rhea" id="RHEA:42712"/>
        <dbReference type="Rhea" id="RHEA-COMP:10167"/>
        <dbReference type="Rhea" id="RHEA-COMP:10193"/>
        <dbReference type="ChEBI" id="CHEBI:15378"/>
        <dbReference type="ChEBI" id="CHEBI:57856"/>
        <dbReference type="ChEBI" id="CHEBI:59789"/>
        <dbReference type="ChEBI" id="CHEBI:65315"/>
        <dbReference type="ChEBI" id="CHEBI:74447"/>
        <dbReference type="EC" id="2.1.1.35"/>
    </reaction>
</comment>
<comment type="catalytic activity">
    <reaction evidence="1">
        <text>uridine(341) in tmRNA + S-adenosyl-L-methionine = 5-methyluridine(341) in tmRNA + S-adenosyl-L-homocysteine + H(+)</text>
        <dbReference type="Rhea" id="RHEA:43612"/>
        <dbReference type="Rhea" id="RHEA-COMP:10630"/>
        <dbReference type="Rhea" id="RHEA-COMP:10631"/>
        <dbReference type="ChEBI" id="CHEBI:15378"/>
        <dbReference type="ChEBI" id="CHEBI:57856"/>
        <dbReference type="ChEBI" id="CHEBI:59789"/>
        <dbReference type="ChEBI" id="CHEBI:65315"/>
        <dbReference type="ChEBI" id="CHEBI:74447"/>
    </reaction>
</comment>
<comment type="similarity">
    <text evidence="1">Belongs to the class I-like SAM-binding methyltransferase superfamily. RNA M5U methyltransferase family. TrmA subfamily.</text>
</comment>
<keyword id="KW-0489">Methyltransferase</keyword>
<keyword id="KW-1185">Reference proteome</keyword>
<keyword id="KW-0949">S-adenosyl-L-methionine</keyword>
<keyword id="KW-0808">Transferase</keyword>
<keyword id="KW-0819">tRNA processing</keyword>
<reference key="1">
    <citation type="submission" date="2008-02" db="EMBL/GenBank/DDBJ databases">
        <title>Complete sequence of Shewanella woodyi ATCC 51908.</title>
        <authorList>
            <consortium name="US DOE Joint Genome Institute"/>
            <person name="Copeland A."/>
            <person name="Lucas S."/>
            <person name="Lapidus A."/>
            <person name="Glavina del Rio T."/>
            <person name="Dalin E."/>
            <person name="Tice H."/>
            <person name="Bruce D."/>
            <person name="Goodwin L."/>
            <person name="Pitluck S."/>
            <person name="Sims D."/>
            <person name="Brettin T."/>
            <person name="Detter J.C."/>
            <person name="Han C."/>
            <person name="Kuske C.R."/>
            <person name="Schmutz J."/>
            <person name="Larimer F."/>
            <person name="Land M."/>
            <person name="Hauser L."/>
            <person name="Kyrpides N."/>
            <person name="Lykidis A."/>
            <person name="Zhao J.-S."/>
            <person name="Richardson P."/>
        </authorList>
    </citation>
    <scope>NUCLEOTIDE SEQUENCE [LARGE SCALE GENOMIC DNA]</scope>
    <source>
        <strain>ATCC 51908 / MS32</strain>
    </source>
</reference>
<protein>
    <recommendedName>
        <fullName evidence="1">tRNA/tmRNA (uracil-C(5))-methyltransferase</fullName>
        <ecNumber evidence="1">2.1.1.-</ecNumber>
        <ecNumber evidence="1">2.1.1.35</ecNumber>
    </recommendedName>
    <alternativeName>
        <fullName evidence="1">tRNA (uracil(54)-C(5))-methyltransferase</fullName>
    </alternativeName>
    <alternativeName>
        <fullName evidence="1">tRNA(m5U54)-methyltransferase</fullName>
        <shortName evidence="1">RUMT</shortName>
    </alternativeName>
    <alternativeName>
        <fullName evidence="1">tmRNA (uracil(341)-C(5))-methyltransferase</fullName>
    </alternativeName>
</protein>
<sequence length="365" mass="42317">MNLAAMDPNTYDAQLEEKRIKLENIFTDFDTPNLEVFSSEQAHYRMRAEFRIWHDGEDMYYYMFDKALNSKVRCDQFLPASKLINEMMPALIAELKPNPLLRHRLFQIDFLSTLSGEILVSLLYHKQLDEQWETEAKSLKERLASKFNVNIIGRARKQKLIFDKDFVVESLQVNGEQLQYHQIENSFTQPNGKVSVKMLEWAIDVTKNSSGDLLELYCGNGNFSIALAQNFDRVLATELAKPSVESAQYNIKINKIDNLQIIRMSAEDFTDAMAKKRSFRRLEGIDLDSYNCNTIFVDPPRAGMDPDTVKLVQGYERIVYISCNPNTLIDNLVELSKTHKITRFALFDQFPYTDHMESGVFLERK</sequence>
<feature type="chain" id="PRO_1000198558" description="tRNA/tmRNA (uracil-C(5))-methyltransferase">
    <location>
        <begin position="1"/>
        <end position="365"/>
    </location>
</feature>
<feature type="active site" description="Nucleophile" evidence="1">
    <location>
        <position position="323"/>
    </location>
</feature>
<feature type="active site" description="Proton acceptor" evidence="1">
    <location>
        <position position="357"/>
    </location>
</feature>
<feature type="binding site" evidence="1">
    <location>
        <position position="189"/>
    </location>
    <ligand>
        <name>S-adenosyl-L-methionine</name>
        <dbReference type="ChEBI" id="CHEBI:59789"/>
    </ligand>
</feature>
<feature type="binding site" evidence="1">
    <location>
        <position position="217"/>
    </location>
    <ligand>
        <name>S-adenosyl-L-methionine</name>
        <dbReference type="ChEBI" id="CHEBI:59789"/>
    </ligand>
</feature>
<feature type="binding site" evidence="1">
    <location>
        <position position="222"/>
    </location>
    <ligand>
        <name>S-adenosyl-L-methionine</name>
        <dbReference type="ChEBI" id="CHEBI:59789"/>
    </ligand>
</feature>
<feature type="binding site" evidence="1">
    <location>
        <position position="238"/>
    </location>
    <ligand>
        <name>S-adenosyl-L-methionine</name>
        <dbReference type="ChEBI" id="CHEBI:59789"/>
    </ligand>
</feature>
<feature type="binding site" evidence="1">
    <location>
        <position position="298"/>
    </location>
    <ligand>
        <name>S-adenosyl-L-methionine</name>
        <dbReference type="ChEBI" id="CHEBI:59789"/>
    </ligand>
</feature>
<proteinExistence type="inferred from homology"/>
<name>TRMA_SHEWM</name>
<dbReference type="EC" id="2.1.1.-" evidence="1"/>
<dbReference type="EC" id="2.1.1.35" evidence="1"/>
<dbReference type="EMBL" id="CP000961">
    <property type="protein sequence ID" value="ACA88960.1"/>
    <property type="molecule type" value="Genomic_DNA"/>
</dbReference>
<dbReference type="RefSeq" id="WP_012327278.1">
    <property type="nucleotide sequence ID" value="NC_010506.1"/>
</dbReference>
<dbReference type="SMR" id="B1KN03"/>
<dbReference type="STRING" id="392500.Swoo_4710"/>
<dbReference type="KEGG" id="swd:Swoo_4710"/>
<dbReference type="eggNOG" id="COG2265">
    <property type="taxonomic scope" value="Bacteria"/>
</dbReference>
<dbReference type="HOGENOM" id="CLU_043022_0_0_6"/>
<dbReference type="Proteomes" id="UP000002168">
    <property type="component" value="Chromosome"/>
</dbReference>
<dbReference type="GO" id="GO:0005829">
    <property type="term" value="C:cytosol"/>
    <property type="evidence" value="ECO:0007669"/>
    <property type="project" value="TreeGrafter"/>
</dbReference>
<dbReference type="GO" id="GO:0019843">
    <property type="term" value="F:rRNA binding"/>
    <property type="evidence" value="ECO:0007669"/>
    <property type="project" value="TreeGrafter"/>
</dbReference>
<dbReference type="GO" id="GO:0030697">
    <property type="term" value="F:tRNA (uracil(54)-C5)-methyltransferase activity, S-adenosyl methionine-dependent"/>
    <property type="evidence" value="ECO:0007669"/>
    <property type="project" value="UniProtKB-UniRule"/>
</dbReference>
<dbReference type="GO" id="GO:0000049">
    <property type="term" value="F:tRNA binding"/>
    <property type="evidence" value="ECO:0007669"/>
    <property type="project" value="TreeGrafter"/>
</dbReference>
<dbReference type="GO" id="GO:0030488">
    <property type="term" value="P:tRNA methylation"/>
    <property type="evidence" value="ECO:0007669"/>
    <property type="project" value="UniProtKB-UniRule"/>
</dbReference>
<dbReference type="CDD" id="cd02440">
    <property type="entry name" value="AdoMet_MTases"/>
    <property type="match status" value="1"/>
</dbReference>
<dbReference type="FunFam" id="2.40.50.1070:FF:000001">
    <property type="entry name" value="tRNA/tmRNA (uracil-C(5))-methyltransferase"/>
    <property type="match status" value="1"/>
</dbReference>
<dbReference type="FunFam" id="3.40.50.150:FF:000012">
    <property type="entry name" value="tRNA/tmRNA (uracil-C(5))-methyltransferase"/>
    <property type="match status" value="1"/>
</dbReference>
<dbReference type="Gene3D" id="2.40.50.1070">
    <property type="match status" value="1"/>
</dbReference>
<dbReference type="Gene3D" id="3.40.50.150">
    <property type="entry name" value="Vaccinia Virus protein VP39"/>
    <property type="match status" value="1"/>
</dbReference>
<dbReference type="HAMAP" id="MF_01011">
    <property type="entry name" value="RNA_methyltr_TrmA"/>
    <property type="match status" value="1"/>
</dbReference>
<dbReference type="InterPro" id="IPR030390">
    <property type="entry name" value="MeTrfase_TrmA_AS"/>
</dbReference>
<dbReference type="InterPro" id="IPR030391">
    <property type="entry name" value="MeTrfase_TrmA_CS"/>
</dbReference>
<dbReference type="InterPro" id="IPR029063">
    <property type="entry name" value="SAM-dependent_MTases_sf"/>
</dbReference>
<dbReference type="InterPro" id="IPR011869">
    <property type="entry name" value="TrmA_MeTrfase"/>
</dbReference>
<dbReference type="InterPro" id="IPR010280">
    <property type="entry name" value="U5_MeTrfase_fam"/>
</dbReference>
<dbReference type="NCBIfam" id="TIGR02143">
    <property type="entry name" value="trmA_only"/>
    <property type="match status" value="1"/>
</dbReference>
<dbReference type="PANTHER" id="PTHR47790">
    <property type="entry name" value="TRNA/TMRNA (URACIL-C(5))-METHYLTRANSFERASE"/>
    <property type="match status" value="1"/>
</dbReference>
<dbReference type="PANTHER" id="PTHR47790:SF2">
    <property type="entry name" value="TRNA_TMRNA (URACIL-C(5))-METHYLTRANSFERASE"/>
    <property type="match status" value="1"/>
</dbReference>
<dbReference type="Pfam" id="PF05958">
    <property type="entry name" value="tRNA_U5-meth_tr"/>
    <property type="match status" value="1"/>
</dbReference>
<dbReference type="SUPFAM" id="SSF53335">
    <property type="entry name" value="S-adenosyl-L-methionine-dependent methyltransferases"/>
    <property type="match status" value="1"/>
</dbReference>
<dbReference type="PROSITE" id="PS51687">
    <property type="entry name" value="SAM_MT_RNA_M5U"/>
    <property type="match status" value="1"/>
</dbReference>
<dbReference type="PROSITE" id="PS01230">
    <property type="entry name" value="TRMA_1"/>
    <property type="match status" value="1"/>
</dbReference>
<dbReference type="PROSITE" id="PS01231">
    <property type="entry name" value="TRMA_2"/>
    <property type="match status" value="1"/>
</dbReference>
<evidence type="ECO:0000255" key="1">
    <source>
        <dbReference type="HAMAP-Rule" id="MF_01011"/>
    </source>
</evidence>
<accession>B1KN03</accession>
<gene>
    <name evidence="1" type="primary">trmA</name>
    <name type="ordered locus">Swoo_4710</name>
</gene>
<organism>
    <name type="scientific">Shewanella woodyi (strain ATCC 51908 / MS32)</name>
    <dbReference type="NCBI Taxonomy" id="392500"/>
    <lineage>
        <taxon>Bacteria</taxon>
        <taxon>Pseudomonadati</taxon>
        <taxon>Pseudomonadota</taxon>
        <taxon>Gammaproteobacteria</taxon>
        <taxon>Alteromonadales</taxon>
        <taxon>Shewanellaceae</taxon>
        <taxon>Shewanella</taxon>
    </lineage>
</organism>